<gene>
    <name type="primary">yukR</name>
</gene>
<dbReference type="EMBL" id="AF079135">
    <property type="protein sequence ID" value="AAC28702.1"/>
    <property type="molecule type" value="Genomic_DNA"/>
</dbReference>
<dbReference type="SMR" id="O87971"/>
<dbReference type="STRING" id="29486.UGYR_00445"/>
<dbReference type="eggNOG" id="COG2771">
    <property type="taxonomic scope" value="Bacteria"/>
</dbReference>
<dbReference type="GO" id="GO:0003677">
    <property type="term" value="F:DNA binding"/>
    <property type="evidence" value="ECO:0007669"/>
    <property type="project" value="UniProtKB-KW"/>
</dbReference>
<dbReference type="GO" id="GO:0009372">
    <property type="term" value="P:quorum sensing"/>
    <property type="evidence" value="ECO:0007669"/>
    <property type="project" value="UniProtKB-KW"/>
</dbReference>
<dbReference type="GO" id="GO:0006355">
    <property type="term" value="P:regulation of DNA-templated transcription"/>
    <property type="evidence" value="ECO:0007669"/>
    <property type="project" value="InterPro"/>
</dbReference>
<dbReference type="CDD" id="cd06170">
    <property type="entry name" value="LuxR_C_like"/>
    <property type="match status" value="1"/>
</dbReference>
<dbReference type="Gene3D" id="3.30.450.80">
    <property type="entry name" value="Transcription factor LuxR-like, autoinducer-binding domain"/>
    <property type="match status" value="1"/>
</dbReference>
<dbReference type="Gene3D" id="1.10.10.10">
    <property type="entry name" value="Winged helix-like DNA-binding domain superfamily/Winged helix DNA-binding domain"/>
    <property type="match status" value="1"/>
</dbReference>
<dbReference type="InterPro" id="IPR016032">
    <property type="entry name" value="Sig_transdc_resp-reg_C-effctor"/>
</dbReference>
<dbReference type="InterPro" id="IPR005143">
    <property type="entry name" value="TF_LuxR_autoind-bd_dom"/>
</dbReference>
<dbReference type="InterPro" id="IPR036693">
    <property type="entry name" value="TF_LuxR_autoind-bd_dom_sf"/>
</dbReference>
<dbReference type="InterPro" id="IPR000792">
    <property type="entry name" value="Tscrpt_reg_LuxR_C"/>
</dbReference>
<dbReference type="InterPro" id="IPR036388">
    <property type="entry name" value="WH-like_DNA-bd_sf"/>
</dbReference>
<dbReference type="PANTHER" id="PTHR44688">
    <property type="entry name" value="DNA-BINDING TRANSCRIPTIONAL ACTIVATOR DEVR_DOSR"/>
    <property type="match status" value="1"/>
</dbReference>
<dbReference type="PANTHER" id="PTHR44688:SF16">
    <property type="entry name" value="DNA-BINDING TRANSCRIPTIONAL ACTIVATOR DEVR_DOSR"/>
    <property type="match status" value="1"/>
</dbReference>
<dbReference type="Pfam" id="PF03472">
    <property type="entry name" value="Autoind_bind"/>
    <property type="match status" value="1"/>
</dbReference>
<dbReference type="Pfam" id="PF00196">
    <property type="entry name" value="GerE"/>
    <property type="match status" value="1"/>
</dbReference>
<dbReference type="PRINTS" id="PR00038">
    <property type="entry name" value="HTHLUXR"/>
</dbReference>
<dbReference type="SMART" id="SM00421">
    <property type="entry name" value="HTH_LUXR"/>
    <property type="match status" value="1"/>
</dbReference>
<dbReference type="SUPFAM" id="SSF46894">
    <property type="entry name" value="C-terminal effector domain of the bipartite response regulators"/>
    <property type="match status" value="1"/>
</dbReference>
<dbReference type="SUPFAM" id="SSF75516">
    <property type="entry name" value="Pheromone-binding domain of LuxR-like quorum-sensing transcription factors"/>
    <property type="match status" value="1"/>
</dbReference>
<dbReference type="PROSITE" id="PS50043">
    <property type="entry name" value="HTH_LUXR_2"/>
    <property type="match status" value="1"/>
</dbReference>
<evidence type="ECO:0000255" key="1">
    <source>
        <dbReference type="PROSITE-ProRule" id="PRU00411"/>
    </source>
</evidence>
<evidence type="ECO:0000305" key="2"/>
<proteinExistence type="inferred from homology"/>
<feature type="chain" id="PRO_0000184197" description="Transcriptional activator protein YukR">
    <location>
        <begin position="1" status="less than"/>
        <end position="229"/>
    </location>
</feature>
<feature type="domain" description="HTH luxR-type" evidence="1">
    <location>
        <begin position="157"/>
        <end position="222"/>
    </location>
</feature>
<feature type="DNA-binding region" description="H-T-H motif" evidence="1">
    <location>
        <begin position="181"/>
        <end position="200"/>
    </location>
</feature>
<feature type="non-terminal residue">
    <location>
        <position position="1"/>
    </location>
</feature>
<protein>
    <recommendedName>
        <fullName>Transcriptional activator protein YukR</fullName>
    </recommendedName>
</protein>
<keyword id="KW-0010">Activator</keyword>
<keyword id="KW-0238">DNA-binding</keyword>
<keyword id="KW-0673">Quorum sensing</keyword>
<keyword id="KW-0804">Transcription</keyword>
<keyword id="KW-0805">Transcription regulation</keyword>
<reference key="1">
    <citation type="submission" date="1998-07" db="EMBL/GenBank/DDBJ databases">
        <title>A hierarchical quorum sensing system in Yersinia pseudotuberculosis is involved in the regulation of motility and morphology.</title>
        <authorList>
            <person name="Atkinson S."/>
            <person name="Throup J.P."/>
            <person name="Williams P."/>
            <person name="Stewart G.S.A.B."/>
        </authorList>
    </citation>
    <scope>NUCLEOTIDE SEQUENCE [GENOMIC DNA]</scope>
    <source>
        <strain>1315</strain>
    </source>
</reference>
<organism>
    <name type="scientific">Yersinia ruckeri</name>
    <dbReference type="NCBI Taxonomy" id="29486"/>
    <lineage>
        <taxon>Bacteria</taxon>
        <taxon>Pseudomonadati</taxon>
        <taxon>Pseudomonadota</taxon>
        <taxon>Gammaproteobacteria</taxon>
        <taxon>Enterobacterales</taxon>
        <taxon>Yersiniaceae</taxon>
        <taxon>Yersinia</taxon>
    </lineage>
</organism>
<accession>O87971</accession>
<sequence length="229" mass="26142">IDRKLERYDSPRYTYMVIDKKNPVDVFIVTSYPDEWADIYTSQNYQHIDPIVLTAFKRISPFAWDENITILSDLKSSKIFALSKKYNIVNGFTFVLHDHMNNLAMLSLIMDNNADKGLNSRIESDKDRLQMNLIKIHEKMLMLEQNKLGVSNGKNTDTSGKGILSPRENEVLHWASMGKTYPEIALIAGITTRTVKHHMGNVVKKLGVINARQAIRLGVELELIKPVLV</sequence>
<comment type="function">
    <text>Probable transcriptional activator. Binds to an autoinducer molecule.</text>
</comment>
<comment type="similarity">
    <text evidence="2">Belongs to the autoinducer-regulated transcriptional regulatory protein family.</text>
</comment>
<name>YUKR_YERRU</name>